<organism>
    <name type="scientific">Desulfosudis oleivorans (strain DSM 6200 / JCM 39069 / Hxd3)</name>
    <name type="common">Desulfococcus oleovorans</name>
    <dbReference type="NCBI Taxonomy" id="96561"/>
    <lineage>
        <taxon>Bacteria</taxon>
        <taxon>Pseudomonadati</taxon>
        <taxon>Thermodesulfobacteriota</taxon>
        <taxon>Desulfobacteria</taxon>
        <taxon>Desulfobacterales</taxon>
        <taxon>Desulfosudaceae</taxon>
        <taxon>Desulfosudis</taxon>
    </lineage>
</organism>
<reference key="1">
    <citation type="submission" date="2007-10" db="EMBL/GenBank/DDBJ databases">
        <title>Complete sequence of Desulfococcus oleovorans Hxd3.</title>
        <authorList>
            <consortium name="US DOE Joint Genome Institute"/>
            <person name="Copeland A."/>
            <person name="Lucas S."/>
            <person name="Lapidus A."/>
            <person name="Barry K."/>
            <person name="Glavina del Rio T."/>
            <person name="Dalin E."/>
            <person name="Tice H."/>
            <person name="Pitluck S."/>
            <person name="Kiss H."/>
            <person name="Brettin T."/>
            <person name="Bruce D."/>
            <person name="Detter J.C."/>
            <person name="Han C."/>
            <person name="Schmutz J."/>
            <person name="Larimer F."/>
            <person name="Land M."/>
            <person name="Hauser L."/>
            <person name="Kyrpides N."/>
            <person name="Kim E."/>
            <person name="Wawrik B."/>
            <person name="Richardson P."/>
        </authorList>
    </citation>
    <scope>NUCLEOTIDE SEQUENCE [LARGE SCALE GENOMIC DNA]</scope>
    <source>
        <strain>DSM 6200 / JCM 39069 / Hxd3</strain>
    </source>
</reference>
<evidence type="ECO:0000255" key="1">
    <source>
        <dbReference type="HAMAP-Rule" id="MF_00501"/>
    </source>
</evidence>
<evidence type="ECO:0000305" key="2"/>
<proteinExistence type="inferred from homology"/>
<gene>
    <name evidence="1" type="primary">rpmE</name>
    <name type="ordered locus">Dole_0471</name>
</gene>
<sequence length="73" mass="8424">MKQEIHPEYHQATARCACGNEFTVGSTKESIKVEICSQCHPFFTGKQKLVDTAGRIERFRRKYAKFEQQKSGK</sequence>
<dbReference type="EMBL" id="CP000859">
    <property type="protein sequence ID" value="ABW66281.1"/>
    <property type="molecule type" value="Genomic_DNA"/>
</dbReference>
<dbReference type="RefSeq" id="WP_012173900.1">
    <property type="nucleotide sequence ID" value="NC_009943.1"/>
</dbReference>
<dbReference type="STRING" id="96561.Dole_0471"/>
<dbReference type="KEGG" id="dol:Dole_0471"/>
<dbReference type="eggNOG" id="COG0254">
    <property type="taxonomic scope" value="Bacteria"/>
</dbReference>
<dbReference type="HOGENOM" id="CLU_114306_4_3_7"/>
<dbReference type="OrthoDB" id="9803251at2"/>
<dbReference type="Proteomes" id="UP000008561">
    <property type="component" value="Chromosome"/>
</dbReference>
<dbReference type="GO" id="GO:1990904">
    <property type="term" value="C:ribonucleoprotein complex"/>
    <property type="evidence" value="ECO:0007669"/>
    <property type="project" value="UniProtKB-KW"/>
</dbReference>
<dbReference type="GO" id="GO:0005840">
    <property type="term" value="C:ribosome"/>
    <property type="evidence" value="ECO:0007669"/>
    <property type="project" value="UniProtKB-KW"/>
</dbReference>
<dbReference type="GO" id="GO:0046872">
    <property type="term" value="F:metal ion binding"/>
    <property type="evidence" value="ECO:0007669"/>
    <property type="project" value="UniProtKB-KW"/>
</dbReference>
<dbReference type="GO" id="GO:0019843">
    <property type="term" value="F:rRNA binding"/>
    <property type="evidence" value="ECO:0007669"/>
    <property type="project" value="UniProtKB-KW"/>
</dbReference>
<dbReference type="GO" id="GO:0003735">
    <property type="term" value="F:structural constituent of ribosome"/>
    <property type="evidence" value="ECO:0007669"/>
    <property type="project" value="InterPro"/>
</dbReference>
<dbReference type="GO" id="GO:0006412">
    <property type="term" value="P:translation"/>
    <property type="evidence" value="ECO:0007669"/>
    <property type="project" value="UniProtKB-UniRule"/>
</dbReference>
<dbReference type="Gene3D" id="4.10.830.30">
    <property type="entry name" value="Ribosomal protein L31"/>
    <property type="match status" value="1"/>
</dbReference>
<dbReference type="HAMAP" id="MF_00501">
    <property type="entry name" value="Ribosomal_bL31_1"/>
    <property type="match status" value="1"/>
</dbReference>
<dbReference type="InterPro" id="IPR034704">
    <property type="entry name" value="Ribosomal_bL28/bL31-like_sf"/>
</dbReference>
<dbReference type="InterPro" id="IPR002150">
    <property type="entry name" value="Ribosomal_bL31"/>
</dbReference>
<dbReference type="InterPro" id="IPR027491">
    <property type="entry name" value="Ribosomal_bL31_A"/>
</dbReference>
<dbReference type="InterPro" id="IPR042105">
    <property type="entry name" value="Ribosomal_bL31_sf"/>
</dbReference>
<dbReference type="NCBIfam" id="TIGR00105">
    <property type="entry name" value="L31"/>
    <property type="match status" value="1"/>
</dbReference>
<dbReference type="NCBIfam" id="NF000612">
    <property type="entry name" value="PRK00019.1"/>
    <property type="match status" value="1"/>
</dbReference>
<dbReference type="NCBIfam" id="NF001809">
    <property type="entry name" value="PRK00528.1"/>
    <property type="match status" value="1"/>
</dbReference>
<dbReference type="PANTHER" id="PTHR33280">
    <property type="entry name" value="50S RIBOSOMAL PROTEIN L31, CHLOROPLASTIC"/>
    <property type="match status" value="1"/>
</dbReference>
<dbReference type="PANTHER" id="PTHR33280:SF1">
    <property type="entry name" value="LARGE RIBOSOMAL SUBUNIT PROTEIN BL31C"/>
    <property type="match status" value="1"/>
</dbReference>
<dbReference type="Pfam" id="PF01197">
    <property type="entry name" value="Ribosomal_L31"/>
    <property type="match status" value="1"/>
</dbReference>
<dbReference type="PRINTS" id="PR01249">
    <property type="entry name" value="RIBOSOMALL31"/>
</dbReference>
<dbReference type="SUPFAM" id="SSF143800">
    <property type="entry name" value="L28p-like"/>
    <property type="match status" value="1"/>
</dbReference>
<dbReference type="PROSITE" id="PS01143">
    <property type="entry name" value="RIBOSOMAL_L31"/>
    <property type="match status" value="1"/>
</dbReference>
<protein>
    <recommendedName>
        <fullName evidence="1">Large ribosomal subunit protein bL31</fullName>
    </recommendedName>
    <alternativeName>
        <fullName evidence="2">50S ribosomal protein L31</fullName>
    </alternativeName>
</protein>
<accession>A8ZTL7</accession>
<name>RL31_DESOH</name>
<keyword id="KW-0479">Metal-binding</keyword>
<keyword id="KW-1185">Reference proteome</keyword>
<keyword id="KW-0687">Ribonucleoprotein</keyword>
<keyword id="KW-0689">Ribosomal protein</keyword>
<keyword id="KW-0694">RNA-binding</keyword>
<keyword id="KW-0699">rRNA-binding</keyword>
<keyword id="KW-0862">Zinc</keyword>
<comment type="function">
    <text evidence="1">Binds the 23S rRNA.</text>
</comment>
<comment type="cofactor">
    <cofactor evidence="1">
        <name>Zn(2+)</name>
        <dbReference type="ChEBI" id="CHEBI:29105"/>
    </cofactor>
    <text evidence="1">Binds 1 zinc ion per subunit.</text>
</comment>
<comment type="subunit">
    <text evidence="1">Part of the 50S ribosomal subunit.</text>
</comment>
<comment type="similarity">
    <text evidence="1">Belongs to the bacterial ribosomal protein bL31 family. Type A subfamily.</text>
</comment>
<feature type="chain" id="PRO_1000126605" description="Large ribosomal subunit protein bL31">
    <location>
        <begin position="1"/>
        <end position="73"/>
    </location>
</feature>
<feature type="binding site" evidence="1">
    <location>
        <position position="16"/>
    </location>
    <ligand>
        <name>Zn(2+)</name>
        <dbReference type="ChEBI" id="CHEBI:29105"/>
    </ligand>
</feature>
<feature type="binding site" evidence="1">
    <location>
        <position position="18"/>
    </location>
    <ligand>
        <name>Zn(2+)</name>
        <dbReference type="ChEBI" id="CHEBI:29105"/>
    </ligand>
</feature>
<feature type="binding site" evidence="1">
    <location>
        <position position="36"/>
    </location>
    <ligand>
        <name>Zn(2+)</name>
        <dbReference type="ChEBI" id="CHEBI:29105"/>
    </ligand>
</feature>
<feature type="binding site" evidence="1">
    <location>
        <position position="39"/>
    </location>
    <ligand>
        <name>Zn(2+)</name>
        <dbReference type="ChEBI" id="CHEBI:29105"/>
    </ligand>
</feature>